<reference evidence="8" key="1">
    <citation type="journal article" date="1998" name="Science">
        <title>Genome sequence of the nematode C. elegans: a platform for investigating biology.</title>
        <authorList>
            <consortium name="The C. elegans sequencing consortium"/>
        </authorList>
    </citation>
    <scope>NUCLEOTIDE SEQUENCE [LARGE SCALE GENOMIC DNA]</scope>
    <source>
        <strain evidence="8">Bristol N2</strain>
    </source>
</reference>
<reference evidence="5" key="2">
    <citation type="journal article" date="1991" name="Dev. Biol.">
        <title>An acid phosphatase as a biochemical marker for intestinal development in the nematode Caenorhabditis elegans.</title>
        <authorList>
            <person name="Beh C.T."/>
            <person name="Ferrari D.C."/>
            <person name="Chung M.A."/>
            <person name="McGhee J.D."/>
        </authorList>
    </citation>
    <scope>CATALYTIC ACTIVITY</scope>
    <scope>BIOPHYSICOCHEMICAL PROPERTIES</scope>
    <scope>SUBUNIT</scope>
    <scope>SUBCELLULAR LOCATION</scope>
    <scope>TISSUE SPECIFICITY</scope>
    <scope>DEVELOPMENTAL STAGE</scope>
    <scope>BLOCKAGE OF N-TERMINUS</scope>
</reference>
<reference evidence="5" key="3">
    <citation type="journal article" date="2005" name="Dev. Biol.">
        <title>Transcriptional control and patterning of the pho-1 gene, an essential acid phosphatase expressed in the C. elegans intestine.</title>
        <authorList>
            <person name="Fukushige T."/>
            <person name="Goszczynski B."/>
            <person name="Yan J."/>
            <person name="McGhee J.D."/>
        </authorList>
    </citation>
    <scope>FUNCTION</scope>
    <scope>CATALYTIC ACTIVITY</scope>
    <scope>TISSUE SPECIFICITY</scope>
    <scope>DEVELOPMENTAL STAGE</scope>
    <scope>DISRUPTION PHENOTYPE</scope>
    <scope>MUTAGENESIS OF MET-70 AND ASP-181</scope>
</reference>
<proteinExistence type="evidence at protein level"/>
<feature type="signal peptide" evidence="2">
    <location>
        <begin position="1"/>
        <end position="19"/>
    </location>
</feature>
<feature type="chain" id="PRO_5004187044" description="Intestinal acid phosphatase" evidence="5">
    <location>
        <begin position="20"/>
        <end position="449"/>
    </location>
</feature>
<feature type="topological domain" description="Extracellular" evidence="5">
    <location>
        <begin position="20"/>
        <end position="428"/>
    </location>
</feature>
<feature type="transmembrane region" description="Helical" evidence="2">
    <location>
        <begin position="429"/>
        <end position="449"/>
    </location>
</feature>
<feature type="active site" description="Nucleophile" evidence="1">
    <location>
        <position position="36"/>
    </location>
</feature>
<feature type="active site" description="Proton donor" evidence="1">
    <location>
        <position position="321"/>
    </location>
</feature>
<feature type="mutagenesis site" description="Maternal effect lethal and loss of phosphatase activity; when associated with N-181." evidence="3">
    <original>M</original>
    <variation>I</variation>
    <location>
        <position position="70"/>
    </location>
</feature>
<feature type="mutagenesis site" description="Maternal effect lethal and loss of phosphatase activity; when associated with I-70." evidence="3">
    <original>D</original>
    <variation>N</variation>
    <location>
        <position position="181"/>
    </location>
</feature>
<dbReference type="EC" id="3.1.3.2" evidence="3 4"/>
<dbReference type="EMBL" id="BX284602">
    <property type="protein sequence ID" value="CCD66681.1"/>
    <property type="molecule type" value="Genomic_DNA"/>
</dbReference>
<dbReference type="PIR" id="T15933">
    <property type="entry name" value="T15933"/>
</dbReference>
<dbReference type="RefSeq" id="NP_494983.1">
    <property type="nucleotide sequence ID" value="NM_062582.5"/>
</dbReference>
<dbReference type="SMR" id="Q19076"/>
<dbReference type="FunCoup" id="Q19076">
    <property type="interactions" value="128"/>
</dbReference>
<dbReference type="IntAct" id="Q19076">
    <property type="interactions" value="1"/>
</dbReference>
<dbReference type="STRING" id="6239.EGAP2.3.2"/>
<dbReference type="PaxDb" id="6239-EGAP2.3.1"/>
<dbReference type="PeptideAtlas" id="Q19076"/>
<dbReference type="EnsemblMetazoa" id="EGAP2.3.1">
    <property type="protein sequence ID" value="EGAP2.3.1"/>
    <property type="gene ID" value="WBGene00004020"/>
</dbReference>
<dbReference type="GeneID" id="173896"/>
<dbReference type="KEGG" id="cel:CELE_EGAP2.3"/>
<dbReference type="UCSC" id="EGAP2.3.1">
    <property type="organism name" value="c. elegans"/>
</dbReference>
<dbReference type="AGR" id="WB:WBGene00004020"/>
<dbReference type="CTD" id="173896"/>
<dbReference type="WormBase" id="EGAP2.3">
    <property type="protein sequence ID" value="CE04325"/>
    <property type="gene ID" value="WBGene00004020"/>
    <property type="gene designation" value="pho-1"/>
</dbReference>
<dbReference type="eggNOG" id="KOG3720">
    <property type="taxonomic scope" value="Eukaryota"/>
</dbReference>
<dbReference type="HOGENOM" id="CLU_030431_2_0_1"/>
<dbReference type="InParanoid" id="Q19076"/>
<dbReference type="OMA" id="AMFFELW"/>
<dbReference type="OrthoDB" id="258392at2759"/>
<dbReference type="PhylomeDB" id="Q19076"/>
<dbReference type="Reactome" id="R-CEL-6798695">
    <property type="pathway name" value="Neutrophil degranulation"/>
</dbReference>
<dbReference type="PRO" id="PR:Q19076"/>
<dbReference type="Proteomes" id="UP000001940">
    <property type="component" value="Chromosome II"/>
</dbReference>
<dbReference type="Bgee" id="WBGene00004020">
    <property type="expression patterns" value="Expressed in larva and 3 other cell types or tissues"/>
</dbReference>
<dbReference type="GO" id="GO:0045121">
    <property type="term" value="C:membrane raft"/>
    <property type="evidence" value="ECO:0007005"/>
    <property type="project" value="WormBase"/>
</dbReference>
<dbReference type="GO" id="GO:0098552">
    <property type="term" value="C:side of membrane"/>
    <property type="evidence" value="ECO:0007669"/>
    <property type="project" value="UniProtKB-KW"/>
</dbReference>
<dbReference type="GO" id="GO:0003993">
    <property type="term" value="F:acid phosphatase activity"/>
    <property type="evidence" value="ECO:0007669"/>
    <property type="project" value="UniProtKB-EC"/>
</dbReference>
<dbReference type="GO" id="GO:0016791">
    <property type="term" value="F:phosphatase activity"/>
    <property type="evidence" value="ECO:0000318"/>
    <property type="project" value="GO_Central"/>
</dbReference>
<dbReference type="CDD" id="cd07061">
    <property type="entry name" value="HP_HAP_like"/>
    <property type="match status" value="1"/>
</dbReference>
<dbReference type="FunFam" id="3.40.50.1240:FF:000010">
    <property type="entry name" value="Prostatic acid phosphatase"/>
    <property type="match status" value="1"/>
</dbReference>
<dbReference type="Gene3D" id="3.40.50.1240">
    <property type="entry name" value="Phosphoglycerate mutase-like"/>
    <property type="match status" value="1"/>
</dbReference>
<dbReference type="InterPro" id="IPR033379">
    <property type="entry name" value="Acid_Pase_AS"/>
</dbReference>
<dbReference type="InterPro" id="IPR000560">
    <property type="entry name" value="His_Pase_clade-2"/>
</dbReference>
<dbReference type="InterPro" id="IPR029033">
    <property type="entry name" value="His_PPase_superfam"/>
</dbReference>
<dbReference type="InterPro" id="IPR050645">
    <property type="entry name" value="Histidine_acid_phosphatase"/>
</dbReference>
<dbReference type="PANTHER" id="PTHR11567">
    <property type="entry name" value="ACID PHOSPHATASE-RELATED"/>
    <property type="match status" value="1"/>
</dbReference>
<dbReference type="PANTHER" id="PTHR11567:SF209">
    <property type="entry name" value="INTESTINAL ACID PHOSPHATASE"/>
    <property type="match status" value="1"/>
</dbReference>
<dbReference type="Pfam" id="PF00328">
    <property type="entry name" value="His_Phos_2"/>
    <property type="match status" value="1"/>
</dbReference>
<dbReference type="SUPFAM" id="SSF53254">
    <property type="entry name" value="Phosphoglycerate mutase-like"/>
    <property type="match status" value="1"/>
</dbReference>
<dbReference type="PROSITE" id="PS00616">
    <property type="entry name" value="HIS_ACID_PHOSPHAT_1"/>
    <property type="match status" value="1"/>
</dbReference>
<keyword id="KW-0325">Glycoprotein</keyword>
<keyword id="KW-0336">GPI-anchor</keyword>
<keyword id="KW-0378">Hydrolase</keyword>
<keyword id="KW-0449">Lipoprotein</keyword>
<keyword id="KW-0472">Membrane</keyword>
<keyword id="KW-1185">Reference proteome</keyword>
<keyword id="KW-0732">Signal</keyword>
<keyword id="KW-0812">Transmembrane</keyword>
<keyword id="KW-1133">Transmembrane helix</keyword>
<sequence>MVSAISIVAIFALEGFVTTYSDGTKDLVFVQTLWRHGDRSPTKTFKTDPFQEDAWQFGGGGWGQLSPAGMKQHLNLGKMLRNRYVTNYNFLPNKYNAKQIYVRSTDVNRTIISAMSNLLGQYGQNDNSSTPGLDYPDVDGWPAGYVPIAVHTVDDDTDHLGNMESTCPFKDQVWELAKTSDEVKSFVNSADVQAVLGNLTNYCGQPVDIDNLWIITNALYIEQIYYNATLRTKNNWFTDAFYAKADAINDQVQLFQNGIFKTVPNIVNGHDVGVLTRKVRGGPILNDMVMHINLKLMCQGQTTPNCTWINNLKNYIYSAHDTTIYAFFSALLIEEYAVKPSGGYPLYSAAVLLELYIDSVDKKPYFKMVYHEQDGSGFKDVTMGIQGCPQNSSYCDLDILRNFANTIKPDQPIDQWCLTDLNKSSSFATVSMLFIAAILAINNNFLGLF</sequence>
<comment type="function">
    <text evidence="3">Acid phosphatase required for normal growth and development. Specifically required for normal gut differentiation.</text>
</comment>
<comment type="catalytic activity">
    <reaction evidence="3 4">
        <text>a phosphate monoester + H2O = an alcohol + phosphate</text>
        <dbReference type="Rhea" id="RHEA:15017"/>
        <dbReference type="ChEBI" id="CHEBI:15377"/>
        <dbReference type="ChEBI" id="CHEBI:30879"/>
        <dbReference type="ChEBI" id="CHEBI:43474"/>
        <dbReference type="ChEBI" id="CHEBI:67140"/>
        <dbReference type="EC" id="3.1.3.2"/>
    </reaction>
</comment>
<comment type="biophysicochemical properties">
    <kinetics>
        <KM evidence="4">0.3 mM for alpha-naphthyl phosphate</KM>
    </kinetics>
    <phDependence>
        <text evidence="4">Optimum pH is 3.5 with alpha-naphthyl phosphate as substrate.</text>
    </phDependence>
</comment>
<comment type="subunit">
    <text evidence="4">Homodimer.</text>
</comment>
<comment type="subcellular location">
    <subcellularLocation>
        <location evidence="7">Membrane</location>
        <topology evidence="2">Single-pass membrane protein</topology>
    </subcellularLocation>
    <subcellularLocation>
        <location evidence="6">Membrane</location>
        <topology evidence="6">Lipid-anchor</topology>
        <topology evidence="6">GPI-anchor</topology>
    </subcellularLocation>
</comment>
<comment type="tissue specificity">
    <text evidence="3 4">Expressed in the intestine, specifically on the edge of the gut lumen, in the 14 posterior cells of the intestine.</text>
</comment>
<comment type="developmental stage">
    <text evidence="3 4">Expressed from late embryogenesis onwards (PubMed:15733671, PubMed:1652526). Temporally expressed in anterior and posterior cells of the intestine in newly hatched larvae (PubMed:15733671).</text>
</comment>
<comment type="PTM">
    <text evidence="4">The N-terminus is blocked.</text>
</comment>
<comment type="disruption phenotype">
    <text evidence="3">RNAi-mediated knockdown results in a maternal effect phenotype whereby the majority of F1 progeny of the RNAi-treated animals survive to adulthood, however 80-100% of F2 embryos arrest during embryogenesis.</text>
</comment>
<comment type="similarity">
    <text evidence="5">Belongs to the histidine acid phosphatase family.</text>
</comment>
<gene>
    <name evidence="9" type="primary">pho-1</name>
    <name evidence="9" type="ORF">EGAP2.3</name>
</gene>
<accession>Q19076</accession>
<protein>
    <recommendedName>
        <fullName evidence="9">Intestinal acid phosphatase</fullName>
        <ecNumber evidence="3 4">3.1.3.2</ecNumber>
    </recommendedName>
</protein>
<name>PHO1_CAEEL</name>
<evidence type="ECO:0000250" key="1">
    <source>
        <dbReference type="UniProtKB" id="P15309"/>
    </source>
</evidence>
<evidence type="ECO:0000255" key="2"/>
<evidence type="ECO:0000269" key="3">
    <source>
    </source>
</evidence>
<evidence type="ECO:0000269" key="4">
    <source>
    </source>
</evidence>
<evidence type="ECO:0000305" key="5"/>
<evidence type="ECO:0000305" key="6">
    <source>
    </source>
</evidence>
<evidence type="ECO:0000305" key="7">
    <source>
    </source>
</evidence>
<evidence type="ECO:0000312" key="8">
    <source>
        <dbReference type="Proteomes" id="UP000001940"/>
    </source>
</evidence>
<evidence type="ECO:0000312" key="9">
    <source>
        <dbReference type="WormBase" id="EGAP2.3"/>
    </source>
</evidence>
<organism evidence="8">
    <name type="scientific">Caenorhabditis elegans</name>
    <dbReference type="NCBI Taxonomy" id="6239"/>
    <lineage>
        <taxon>Eukaryota</taxon>
        <taxon>Metazoa</taxon>
        <taxon>Ecdysozoa</taxon>
        <taxon>Nematoda</taxon>
        <taxon>Chromadorea</taxon>
        <taxon>Rhabditida</taxon>
        <taxon>Rhabditina</taxon>
        <taxon>Rhabditomorpha</taxon>
        <taxon>Rhabditoidea</taxon>
        <taxon>Rhabditidae</taxon>
        <taxon>Peloderinae</taxon>
        <taxon>Caenorhabditis</taxon>
    </lineage>
</organism>